<organism>
    <name type="scientific">Cupriavidus taiwanensis (strain DSM 17343 / BCRC 17206 / CCUG 44338 / CIP 107171 / LMG 19424 / R1)</name>
    <name type="common">Ralstonia taiwanensis (strain LMG 19424)</name>
    <dbReference type="NCBI Taxonomy" id="977880"/>
    <lineage>
        <taxon>Bacteria</taxon>
        <taxon>Pseudomonadati</taxon>
        <taxon>Pseudomonadota</taxon>
        <taxon>Betaproteobacteria</taxon>
        <taxon>Burkholderiales</taxon>
        <taxon>Burkholderiaceae</taxon>
        <taxon>Cupriavidus</taxon>
    </lineage>
</organism>
<proteinExistence type="inferred from homology"/>
<accession>B3R4W1</accession>
<reference key="1">
    <citation type="journal article" date="2008" name="Genome Res.">
        <title>Genome sequence of the beta-rhizobium Cupriavidus taiwanensis and comparative genomics of rhizobia.</title>
        <authorList>
            <person name="Amadou C."/>
            <person name="Pascal G."/>
            <person name="Mangenot S."/>
            <person name="Glew M."/>
            <person name="Bontemps C."/>
            <person name="Capela D."/>
            <person name="Carrere S."/>
            <person name="Cruveiller S."/>
            <person name="Dossat C."/>
            <person name="Lajus A."/>
            <person name="Marchetti M."/>
            <person name="Poinsot V."/>
            <person name="Rouy Z."/>
            <person name="Servin B."/>
            <person name="Saad M."/>
            <person name="Schenowitz C."/>
            <person name="Barbe V."/>
            <person name="Batut J."/>
            <person name="Medigue C."/>
            <person name="Masson-Boivin C."/>
        </authorList>
    </citation>
    <scope>NUCLEOTIDE SEQUENCE [LARGE SCALE GENOMIC DNA]</scope>
    <source>
        <strain>DSM 17343 / BCRC 17206 / CCUG 44338 / CIP 107171 / LMG 19424 / R1</strain>
    </source>
</reference>
<protein>
    <recommendedName>
        <fullName evidence="1">ATP-dependent Clp protease proteolytic subunit</fullName>
        <ecNumber evidence="1">3.4.21.92</ecNumber>
    </recommendedName>
    <alternativeName>
        <fullName evidence="1">Endopeptidase Clp</fullName>
    </alternativeName>
</protein>
<name>CLPP_CUPTR</name>
<keyword id="KW-0963">Cytoplasm</keyword>
<keyword id="KW-0378">Hydrolase</keyword>
<keyword id="KW-0645">Protease</keyword>
<keyword id="KW-0720">Serine protease</keyword>
<comment type="function">
    <text evidence="1">Cleaves peptides in various proteins in a process that requires ATP hydrolysis. Has a chymotrypsin-like activity. Plays a major role in the degradation of misfolded proteins.</text>
</comment>
<comment type="catalytic activity">
    <reaction evidence="1">
        <text>Hydrolysis of proteins to small peptides in the presence of ATP and magnesium. alpha-casein is the usual test substrate. In the absence of ATP, only oligopeptides shorter than five residues are hydrolyzed (such as succinyl-Leu-Tyr-|-NHMec, and Leu-Tyr-Leu-|-Tyr-Trp, in which cleavage of the -Tyr-|-Leu- and -Tyr-|-Trp bonds also occurs).</text>
        <dbReference type="EC" id="3.4.21.92"/>
    </reaction>
</comment>
<comment type="subunit">
    <text evidence="1">Fourteen ClpP subunits assemble into 2 heptameric rings which stack back to back to give a disk-like structure with a central cavity, resembling the structure of eukaryotic proteasomes.</text>
</comment>
<comment type="subcellular location">
    <subcellularLocation>
        <location evidence="1">Cytoplasm</location>
    </subcellularLocation>
</comment>
<comment type="similarity">
    <text evidence="1">Belongs to the peptidase S14 family.</text>
</comment>
<gene>
    <name evidence="1" type="primary">clpP</name>
    <name type="ordered locus">RALTA_A1390</name>
</gene>
<dbReference type="EC" id="3.4.21.92" evidence="1"/>
<dbReference type="EMBL" id="CU633749">
    <property type="protein sequence ID" value="CAQ69344.1"/>
    <property type="molecule type" value="Genomic_DNA"/>
</dbReference>
<dbReference type="RefSeq" id="WP_011615108.1">
    <property type="nucleotide sequence ID" value="NC_010528.1"/>
</dbReference>
<dbReference type="SMR" id="B3R4W1"/>
<dbReference type="MEROPS" id="S14.001"/>
<dbReference type="GeneID" id="34308303"/>
<dbReference type="KEGG" id="cti:RALTA_A1390"/>
<dbReference type="eggNOG" id="COG0740">
    <property type="taxonomic scope" value="Bacteria"/>
</dbReference>
<dbReference type="HOGENOM" id="CLU_058707_3_2_4"/>
<dbReference type="BioCyc" id="CTAI977880:RALTA_RS06660-MONOMER"/>
<dbReference type="Proteomes" id="UP000001692">
    <property type="component" value="Chromosome 1"/>
</dbReference>
<dbReference type="GO" id="GO:0005737">
    <property type="term" value="C:cytoplasm"/>
    <property type="evidence" value="ECO:0007669"/>
    <property type="project" value="UniProtKB-SubCell"/>
</dbReference>
<dbReference type="GO" id="GO:0009368">
    <property type="term" value="C:endopeptidase Clp complex"/>
    <property type="evidence" value="ECO:0007669"/>
    <property type="project" value="TreeGrafter"/>
</dbReference>
<dbReference type="GO" id="GO:0004176">
    <property type="term" value="F:ATP-dependent peptidase activity"/>
    <property type="evidence" value="ECO:0007669"/>
    <property type="project" value="InterPro"/>
</dbReference>
<dbReference type="GO" id="GO:0051117">
    <property type="term" value="F:ATPase binding"/>
    <property type="evidence" value="ECO:0007669"/>
    <property type="project" value="TreeGrafter"/>
</dbReference>
<dbReference type="GO" id="GO:0004252">
    <property type="term" value="F:serine-type endopeptidase activity"/>
    <property type="evidence" value="ECO:0007669"/>
    <property type="project" value="UniProtKB-UniRule"/>
</dbReference>
<dbReference type="GO" id="GO:0006515">
    <property type="term" value="P:protein quality control for misfolded or incompletely synthesized proteins"/>
    <property type="evidence" value="ECO:0007669"/>
    <property type="project" value="TreeGrafter"/>
</dbReference>
<dbReference type="CDD" id="cd07017">
    <property type="entry name" value="S14_ClpP_2"/>
    <property type="match status" value="1"/>
</dbReference>
<dbReference type="FunFam" id="3.90.226.10:FF:000001">
    <property type="entry name" value="ATP-dependent Clp protease proteolytic subunit"/>
    <property type="match status" value="1"/>
</dbReference>
<dbReference type="Gene3D" id="3.90.226.10">
    <property type="entry name" value="2-enoyl-CoA Hydratase, Chain A, domain 1"/>
    <property type="match status" value="1"/>
</dbReference>
<dbReference type="HAMAP" id="MF_00444">
    <property type="entry name" value="ClpP"/>
    <property type="match status" value="1"/>
</dbReference>
<dbReference type="InterPro" id="IPR001907">
    <property type="entry name" value="ClpP"/>
</dbReference>
<dbReference type="InterPro" id="IPR029045">
    <property type="entry name" value="ClpP/crotonase-like_dom_sf"/>
</dbReference>
<dbReference type="InterPro" id="IPR023562">
    <property type="entry name" value="ClpP/TepA"/>
</dbReference>
<dbReference type="InterPro" id="IPR033135">
    <property type="entry name" value="ClpP_His_AS"/>
</dbReference>
<dbReference type="InterPro" id="IPR018215">
    <property type="entry name" value="ClpP_Ser_AS"/>
</dbReference>
<dbReference type="NCBIfam" id="TIGR00493">
    <property type="entry name" value="clpP"/>
    <property type="match status" value="1"/>
</dbReference>
<dbReference type="NCBIfam" id="NF001368">
    <property type="entry name" value="PRK00277.1"/>
    <property type="match status" value="1"/>
</dbReference>
<dbReference type="NCBIfam" id="NF009205">
    <property type="entry name" value="PRK12553.1"/>
    <property type="match status" value="1"/>
</dbReference>
<dbReference type="PANTHER" id="PTHR10381">
    <property type="entry name" value="ATP-DEPENDENT CLP PROTEASE PROTEOLYTIC SUBUNIT"/>
    <property type="match status" value="1"/>
</dbReference>
<dbReference type="PANTHER" id="PTHR10381:SF70">
    <property type="entry name" value="ATP-DEPENDENT CLP PROTEASE PROTEOLYTIC SUBUNIT"/>
    <property type="match status" value="1"/>
</dbReference>
<dbReference type="Pfam" id="PF00574">
    <property type="entry name" value="CLP_protease"/>
    <property type="match status" value="1"/>
</dbReference>
<dbReference type="PRINTS" id="PR00127">
    <property type="entry name" value="CLPPROTEASEP"/>
</dbReference>
<dbReference type="SUPFAM" id="SSF52096">
    <property type="entry name" value="ClpP/crotonase"/>
    <property type="match status" value="1"/>
</dbReference>
<dbReference type="PROSITE" id="PS00382">
    <property type="entry name" value="CLP_PROTEASE_HIS"/>
    <property type="match status" value="1"/>
</dbReference>
<dbReference type="PROSITE" id="PS00381">
    <property type="entry name" value="CLP_PROTEASE_SER"/>
    <property type="match status" value="1"/>
</dbReference>
<evidence type="ECO:0000255" key="1">
    <source>
        <dbReference type="HAMAP-Rule" id="MF_00444"/>
    </source>
</evidence>
<feature type="chain" id="PRO_1000189641" description="ATP-dependent Clp protease proteolytic subunit">
    <location>
        <begin position="1"/>
        <end position="216"/>
    </location>
</feature>
<feature type="active site" description="Nucleophile" evidence="1">
    <location>
        <position position="120"/>
    </location>
</feature>
<feature type="active site" evidence="1">
    <location>
        <position position="145"/>
    </location>
</feature>
<sequence>MTRNDLLDRLATTQASALETQGLGLVPMVVEQSGRGERAYDIYSRLLKERVVFMVGEVNDQTANLVVAQLLFLESENPDKDVSLYINSPGGSVSAGLAIYDTMQFIKPDVSTLCMGMAASMGAFLLAAGAKGKRSALPNSRIMIHQPLGGARGQASDIEIQAREILYLRERLNTILSEVTGQPVEKIARDTDRDNFMSGDQAVDYGLIDKVLARRG</sequence>